<organism>
    <name type="scientific">Staphylococcus haemolyticus (strain JCSC1435)</name>
    <dbReference type="NCBI Taxonomy" id="279808"/>
    <lineage>
        <taxon>Bacteria</taxon>
        <taxon>Bacillati</taxon>
        <taxon>Bacillota</taxon>
        <taxon>Bacilli</taxon>
        <taxon>Bacillales</taxon>
        <taxon>Staphylococcaceae</taxon>
        <taxon>Staphylococcus</taxon>
    </lineage>
</organism>
<sequence length="113" mass="12522">MEIIMIFVCGILASISVYLVLSKSLIRIVMGTTLITHASNLFLITMGGLKHGEMPIYEKNISQYVDPIPHALILTAIVIAFATTAFFLVLAFRTYKELGTDNVERMKGVLDDD</sequence>
<name>MNHC1_STAHJ</name>
<feature type="chain" id="PRO_0000372127" description="Na(+)/H(+) antiporter subunit C1">
    <location>
        <begin position="1"/>
        <end position="113"/>
    </location>
</feature>
<feature type="transmembrane region" description="Helical" evidence="2">
    <location>
        <begin position="1"/>
        <end position="21"/>
    </location>
</feature>
<feature type="transmembrane region" description="Helical" evidence="2">
    <location>
        <begin position="28"/>
        <end position="48"/>
    </location>
</feature>
<feature type="transmembrane region" description="Helical" evidence="2">
    <location>
        <begin position="72"/>
        <end position="92"/>
    </location>
</feature>
<comment type="function">
    <text evidence="1">Mnh complex is a Na(+)/H(+) antiporter involved in Na(+) excretion.</text>
</comment>
<comment type="subunit">
    <text evidence="1">May form a heterooligomeric complex that consists of seven subunits: mnhA1, mnhB1, mnhC1, mnhD1, mnhE1, mnhF1 and mnhG1.</text>
</comment>
<comment type="subcellular location">
    <subcellularLocation>
        <location evidence="3">Cell membrane</location>
        <topology evidence="3">Multi-pass membrane protein</topology>
    </subcellularLocation>
</comment>
<comment type="similarity">
    <text evidence="3">Belongs to the CPA3 antiporters (TC 2.A.63) subunit C family.</text>
</comment>
<keyword id="KW-0050">Antiport</keyword>
<keyword id="KW-1003">Cell membrane</keyword>
<keyword id="KW-0375">Hydrogen ion transport</keyword>
<keyword id="KW-0406">Ion transport</keyword>
<keyword id="KW-0472">Membrane</keyword>
<keyword id="KW-0915">Sodium</keyword>
<keyword id="KW-0739">Sodium transport</keyword>
<keyword id="KW-0812">Transmembrane</keyword>
<keyword id="KW-1133">Transmembrane helix</keyword>
<keyword id="KW-0813">Transport</keyword>
<protein>
    <recommendedName>
        <fullName>Na(+)/H(+) antiporter subunit C1</fullName>
    </recommendedName>
    <alternativeName>
        <fullName>Mnh complex subunit C1</fullName>
    </alternativeName>
</protein>
<accession>Q4L4W5</accession>
<evidence type="ECO:0000250" key="1"/>
<evidence type="ECO:0000255" key="2"/>
<evidence type="ECO:0000305" key="3"/>
<gene>
    <name type="primary">mnhC1</name>
    <name type="ordered locus">SH2001</name>
</gene>
<proteinExistence type="inferred from homology"/>
<dbReference type="EMBL" id="AP006716">
    <property type="protein sequence ID" value="BAE05310.1"/>
    <property type="molecule type" value="Genomic_DNA"/>
</dbReference>
<dbReference type="RefSeq" id="WP_011276268.1">
    <property type="nucleotide sequence ID" value="NC_007168.1"/>
</dbReference>
<dbReference type="SMR" id="Q4L4W5"/>
<dbReference type="GeneID" id="93781361"/>
<dbReference type="KEGG" id="sha:SH2001"/>
<dbReference type="eggNOG" id="COG1006">
    <property type="taxonomic scope" value="Bacteria"/>
</dbReference>
<dbReference type="HOGENOM" id="CLU_082058_3_1_9"/>
<dbReference type="OrthoDB" id="9799219at2"/>
<dbReference type="Proteomes" id="UP000000543">
    <property type="component" value="Chromosome"/>
</dbReference>
<dbReference type="GO" id="GO:0005886">
    <property type="term" value="C:plasma membrane"/>
    <property type="evidence" value="ECO:0007669"/>
    <property type="project" value="UniProtKB-SubCell"/>
</dbReference>
<dbReference type="GO" id="GO:0015297">
    <property type="term" value="F:antiporter activity"/>
    <property type="evidence" value="ECO:0007669"/>
    <property type="project" value="UniProtKB-KW"/>
</dbReference>
<dbReference type="GO" id="GO:0008324">
    <property type="term" value="F:monoatomic cation transmembrane transporter activity"/>
    <property type="evidence" value="ECO:0007669"/>
    <property type="project" value="InterPro"/>
</dbReference>
<dbReference type="GO" id="GO:1902600">
    <property type="term" value="P:proton transmembrane transport"/>
    <property type="evidence" value="ECO:0007669"/>
    <property type="project" value="UniProtKB-KW"/>
</dbReference>
<dbReference type="GO" id="GO:0006814">
    <property type="term" value="P:sodium ion transport"/>
    <property type="evidence" value="ECO:0007669"/>
    <property type="project" value="UniProtKB-KW"/>
</dbReference>
<dbReference type="Gene3D" id="1.10.287.3510">
    <property type="match status" value="1"/>
</dbReference>
<dbReference type="InterPro" id="IPR050601">
    <property type="entry name" value="CPA3_antiporter_subunitC"/>
</dbReference>
<dbReference type="InterPro" id="IPR006673">
    <property type="entry name" value="Mnh_C1_su"/>
</dbReference>
<dbReference type="InterPro" id="IPR039428">
    <property type="entry name" value="NUOK/Mnh_C1-like"/>
</dbReference>
<dbReference type="NCBIfam" id="TIGR00941">
    <property type="entry name" value="2a6301s03"/>
    <property type="match status" value="1"/>
</dbReference>
<dbReference type="NCBIfam" id="NF006372">
    <property type="entry name" value="PRK08600.1"/>
    <property type="match status" value="1"/>
</dbReference>
<dbReference type="NCBIfam" id="NF006573">
    <property type="entry name" value="PRK09094.1"/>
    <property type="match status" value="1"/>
</dbReference>
<dbReference type="PANTHER" id="PTHR34583">
    <property type="entry name" value="ANTIPORTER SUBUNIT MNHC2-RELATED"/>
    <property type="match status" value="1"/>
</dbReference>
<dbReference type="PANTHER" id="PTHR34583:SF2">
    <property type="entry name" value="ANTIPORTER SUBUNIT MNHC2-RELATED"/>
    <property type="match status" value="1"/>
</dbReference>
<dbReference type="Pfam" id="PF00420">
    <property type="entry name" value="Oxidored_q2"/>
    <property type="match status" value="1"/>
</dbReference>
<reference key="1">
    <citation type="journal article" date="2005" name="J. Bacteriol.">
        <title>Whole-genome sequencing of Staphylococcus haemolyticus uncovers the extreme plasticity of its genome and the evolution of human-colonizing staphylococcal species.</title>
        <authorList>
            <person name="Takeuchi F."/>
            <person name="Watanabe S."/>
            <person name="Baba T."/>
            <person name="Yuzawa H."/>
            <person name="Ito T."/>
            <person name="Morimoto Y."/>
            <person name="Kuroda M."/>
            <person name="Cui L."/>
            <person name="Takahashi M."/>
            <person name="Ankai A."/>
            <person name="Baba S."/>
            <person name="Fukui S."/>
            <person name="Lee J.C."/>
            <person name="Hiramatsu K."/>
        </authorList>
    </citation>
    <scope>NUCLEOTIDE SEQUENCE [LARGE SCALE GENOMIC DNA]</scope>
    <source>
        <strain>JCSC1435</strain>
    </source>
</reference>